<reference key="1">
    <citation type="journal article" date="2006" name="J. Bacteriol.">
        <title>Comparative genomic analysis of three strains of Ehrlichia ruminantium reveals an active process of genome size plasticity.</title>
        <authorList>
            <person name="Frutos R."/>
            <person name="Viari A."/>
            <person name="Ferraz C."/>
            <person name="Morgat A."/>
            <person name="Eychenie S."/>
            <person name="Kandassamy Y."/>
            <person name="Chantal I."/>
            <person name="Bensaid A."/>
            <person name="Coissac E."/>
            <person name="Vachiery N."/>
            <person name="Demaille J."/>
            <person name="Martinez D."/>
        </authorList>
    </citation>
    <scope>NUCLEOTIDE SEQUENCE [LARGE SCALE GENOMIC DNA]</scope>
    <source>
        <strain>Gardel</strain>
    </source>
</reference>
<keyword id="KW-0066">ATP synthesis</keyword>
<keyword id="KW-0067">ATP-binding</keyword>
<keyword id="KW-0997">Cell inner membrane</keyword>
<keyword id="KW-1003">Cell membrane</keyword>
<keyword id="KW-0139">CF(1)</keyword>
<keyword id="KW-0375">Hydrogen ion transport</keyword>
<keyword id="KW-0406">Ion transport</keyword>
<keyword id="KW-0472">Membrane</keyword>
<keyword id="KW-0547">Nucleotide-binding</keyword>
<keyword id="KW-1278">Translocase</keyword>
<keyword id="KW-0813">Transport</keyword>
<dbReference type="EC" id="7.1.2.2" evidence="1"/>
<dbReference type="EMBL" id="CR925677">
    <property type="protein sequence ID" value="CAI27923.1"/>
    <property type="status" value="ALT_INIT"/>
    <property type="molecule type" value="Genomic_DNA"/>
</dbReference>
<dbReference type="RefSeq" id="WP_173358427.1">
    <property type="nucleotide sequence ID" value="NC_006831.1"/>
</dbReference>
<dbReference type="SMR" id="Q5FGY3"/>
<dbReference type="KEGG" id="erg:ERGA_CDS_04710"/>
<dbReference type="HOGENOM" id="CLU_022398_0_2_5"/>
<dbReference type="Proteomes" id="UP000000533">
    <property type="component" value="Chromosome"/>
</dbReference>
<dbReference type="GO" id="GO:0005886">
    <property type="term" value="C:plasma membrane"/>
    <property type="evidence" value="ECO:0007669"/>
    <property type="project" value="UniProtKB-SubCell"/>
</dbReference>
<dbReference type="GO" id="GO:0045259">
    <property type="term" value="C:proton-transporting ATP synthase complex"/>
    <property type="evidence" value="ECO:0007669"/>
    <property type="project" value="UniProtKB-KW"/>
</dbReference>
<dbReference type="GO" id="GO:0005524">
    <property type="term" value="F:ATP binding"/>
    <property type="evidence" value="ECO:0007669"/>
    <property type="project" value="UniProtKB-UniRule"/>
</dbReference>
<dbReference type="GO" id="GO:0016887">
    <property type="term" value="F:ATP hydrolysis activity"/>
    <property type="evidence" value="ECO:0007669"/>
    <property type="project" value="InterPro"/>
</dbReference>
<dbReference type="GO" id="GO:0046933">
    <property type="term" value="F:proton-transporting ATP synthase activity, rotational mechanism"/>
    <property type="evidence" value="ECO:0007669"/>
    <property type="project" value="UniProtKB-UniRule"/>
</dbReference>
<dbReference type="CDD" id="cd18110">
    <property type="entry name" value="ATP-synt_F1_beta_C"/>
    <property type="match status" value="1"/>
</dbReference>
<dbReference type="CDD" id="cd18115">
    <property type="entry name" value="ATP-synt_F1_beta_N"/>
    <property type="match status" value="1"/>
</dbReference>
<dbReference type="CDD" id="cd01133">
    <property type="entry name" value="F1-ATPase_beta_CD"/>
    <property type="match status" value="1"/>
</dbReference>
<dbReference type="FunFam" id="1.10.1140.10:FF:000001">
    <property type="entry name" value="ATP synthase subunit beta"/>
    <property type="match status" value="1"/>
</dbReference>
<dbReference type="FunFam" id="3.40.50.300:FF:000026">
    <property type="entry name" value="ATP synthase subunit beta"/>
    <property type="match status" value="1"/>
</dbReference>
<dbReference type="Gene3D" id="2.40.10.170">
    <property type="match status" value="1"/>
</dbReference>
<dbReference type="Gene3D" id="1.10.1140.10">
    <property type="entry name" value="Bovine Mitochondrial F1-atpase, Atp Synthase Beta Chain, Chain D, domain 3"/>
    <property type="match status" value="1"/>
</dbReference>
<dbReference type="Gene3D" id="3.40.50.300">
    <property type="entry name" value="P-loop containing nucleotide triphosphate hydrolases"/>
    <property type="match status" value="1"/>
</dbReference>
<dbReference type="HAMAP" id="MF_01347">
    <property type="entry name" value="ATP_synth_beta_bact"/>
    <property type="match status" value="1"/>
</dbReference>
<dbReference type="InterPro" id="IPR003593">
    <property type="entry name" value="AAA+_ATPase"/>
</dbReference>
<dbReference type="InterPro" id="IPR055190">
    <property type="entry name" value="ATP-synt_VA_C"/>
</dbReference>
<dbReference type="InterPro" id="IPR005722">
    <property type="entry name" value="ATP_synth_F1_bsu"/>
</dbReference>
<dbReference type="InterPro" id="IPR020003">
    <property type="entry name" value="ATPase_a/bsu_AS"/>
</dbReference>
<dbReference type="InterPro" id="IPR050053">
    <property type="entry name" value="ATPase_alpha/beta_chains"/>
</dbReference>
<dbReference type="InterPro" id="IPR004100">
    <property type="entry name" value="ATPase_F1/V1/A1_a/bsu_N"/>
</dbReference>
<dbReference type="InterPro" id="IPR036121">
    <property type="entry name" value="ATPase_F1/V1/A1_a/bsu_N_sf"/>
</dbReference>
<dbReference type="InterPro" id="IPR000194">
    <property type="entry name" value="ATPase_F1/V1/A1_a/bsu_nucl-bd"/>
</dbReference>
<dbReference type="InterPro" id="IPR024034">
    <property type="entry name" value="ATPase_F1/V1_b/a_C"/>
</dbReference>
<dbReference type="InterPro" id="IPR027417">
    <property type="entry name" value="P-loop_NTPase"/>
</dbReference>
<dbReference type="NCBIfam" id="TIGR01039">
    <property type="entry name" value="atpD"/>
    <property type="match status" value="1"/>
</dbReference>
<dbReference type="PANTHER" id="PTHR15184">
    <property type="entry name" value="ATP SYNTHASE"/>
    <property type="match status" value="1"/>
</dbReference>
<dbReference type="PANTHER" id="PTHR15184:SF71">
    <property type="entry name" value="ATP SYNTHASE SUBUNIT BETA, MITOCHONDRIAL"/>
    <property type="match status" value="1"/>
</dbReference>
<dbReference type="Pfam" id="PF00006">
    <property type="entry name" value="ATP-synt_ab"/>
    <property type="match status" value="1"/>
</dbReference>
<dbReference type="Pfam" id="PF02874">
    <property type="entry name" value="ATP-synt_ab_N"/>
    <property type="match status" value="1"/>
</dbReference>
<dbReference type="Pfam" id="PF22919">
    <property type="entry name" value="ATP-synt_VA_C"/>
    <property type="match status" value="1"/>
</dbReference>
<dbReference type="SMART" id="SM00382">
    <property type="entry name" value="AAA"/>
    <property type="match status" value="1"/>
</dbReference>
<dbReference type="SUPFAM" id="SSF47917">
    <property type="entry name" value="C-terminal domain of alpha and beta subunits of F1 ATP synthase"/>
    <property type="match status" value="1"/>
</dbReference>
<dbReference type="SUPFAM" id="SSF50615">
    <property type="entry name" value="N-terminal domain of alpha and beta subunits of F1 ATP synthase"/>
    <property type="match status" value="1"/>
</dbReference>
<dbReference type="SUPFAM" id="SSF52540">
    <property type="entry name" value="P-loop containing nucleoside triphosphate hydrolases"/>
    <property type="match status" value="1"/>
</dbReference>
<dbReference type="PROSITE" id="PS00152">
    <property type="entry name" value="ATPASE_ALPHA_BETA"/>
    <property type="match status" value="1"/>
</dbReference>
<feature type="chain" id="PRO_0000254257" description="ATP synthase subunit beta">
    <location>
        <begin position="1"/>
        <end position="504"/>
    </location>
</feature>
<feature type="binding site" evidence="1">
    <location>
        <begin position="181"/>
        <end position="188"/>
    </location>
    <ligand>
        <name>ATP</name>
        <dbReference type="ChEBI" id="CHEBI:30616"/>
    </ligand>
</feature>
<proteinExistence type="inferred from homology"/>
<evidence type="ECO:0000255" key="1">
    <source>
        <dbReference type="HAMAP-Rule" id="MF_01347"/>
    </source>
</evidence>
<evidence type="ECO:0000305" key="2"/>
<protein>
    <recommendedName>
        <fullName evidence="1">ATP synthase subunit beta</fullName>
        <ecNumber evidence="1">7.1.2.2</ecNumber>
    </recommendedName>
    <alternativeName>
        <fullName evidence="1">ATP synthase F1 sector subunit beta</fullName>
    </alternativeName>
    <alternativeName>
        <fullName evidence="1">F-ATPase subunit beta</fullName>
    </alternativeName>
</protein>
<comment type="function">
    <text evidence="1">Produces ATP from ADP in the presence of a proton gradient across the membrane. The catalytic sites are hosted primarily by the beta subunits.</text>
</comment>
<comment type="catalytic activity">
    <reaction evidence="1">
        <text>ATP + H2O + 4 H(+)(in) = ADP + phosphate + 5 H(+)(out)</text>
        <dbReference type="Rhea" id="RHEA:57720"/>
        <dbReference type="ChEBI" id="CHEBI:15377"/>
        <dbReference type="ChEBI" id="CHEBI:15378"/>
        <dbReference type="ChEBI" id="CHEBI:30616"/>
        <dbReference type="ChEBI" id="CHEBI:43474"/>
        <dbReference type="ChEBI" id="CHEBI:456216"/>
        <dbReference type="EC" id="7.1.2.2"/>
    </reaction>
</comment>
<comment type="subunit">
    <text evidence="1">F-type ATPases have 2 components, CF(1) - the catalytic core - and CF(0) - the membrane proton channel. CF(1) has five subunits: alpha(3), beta(3), gamma(1), delta(1), epsilon(1). CF(0) has three main subunits: a(1), b(2) and c(9-12). The alpha and beta chains form an alternating ring which encloses part of the gamma chain. CF(1) is attached to CF(0) by a central stalk formed by the gamma and epsilon chains, while a peripheral stalk is formed by the delta and b chains.</text>
</comment>
<comment type="subcellular location">
    <subcellularLocation>
        <location evidence="1">Cell inner membrane</location>
        <topology evidence="1">Peripheral membrane protein</topology>
    </subcellularLocation>
</comment>
<comment type="similarity">
    <text evidence="1">Belongs to the ATPase alpha/beta chains family.</text>
</comment>
<comment type="sequence caution" evidence="2">
    <conflict type="erroneous initiation">
        <sequence resource="EMBL-CDS" id="CAI27923"/>
    </conflict>
</comment>
<sequence>MSSLTGKVKGRARKIKGDADIRVNESTENVGLVIRVMTAVVDIKFPSGKVPKILNALESKEIYNGKKLVLEVSQHISDSIVRCIALDSTDGLSRNDEFIDTGAPISVPVGRATLGRVFDVLGNPIDNCGPLTKSDYSIKPIYSEVPKLTDQKVTTEILVTGIKVIDLLAPYLKGGKVGLFGGAGVGKTVLIMELIHNIAKAHKGVSVFAGVGERTREGNDLYHEMIESGVINLEEKDKSQAVLVYGQMNEPPGARLRVALSALTMAEYFRDVENQDVLFFVDNIFRFTQSGSEISALLGRIPSAVGYQPTLAAEMGAMQERITSTNRGSITSVQAIYVPADDLTDPAPATSFAHLDSTTVLSRQIAELGIYPAVDPLDSASQALSIDIVGEKHYEVSKEVQRILQTYKSLQDIIAILGMEELSEEDKLIVARARKIQRFLSQPFHVAEVFTGTPGVFVSLEDTVSSFKDIVEGKYDHLPEAAFYMVSNINEAVKKAELLQKEGK</sequence>
<gene>
    <name evidence="1" type="primary">atpD</name>
    <name type="ordered locus">ERGA_CDS_04710</name>
</gene>
<organism>
    <name type="scientific">Ehrlichia ruminantium (strain Gardel)</name>
    <dbReference type="NCBI Taxonomy" id="302409"/>
    <lineage>
        <taxon>Bacteria</taxon>
        <taxon>Pseudomonadati</taxon>
        <taxon>Pseudomonadota</taxon>
        <taxon>Alphaproteobacteria</taxon>
        <taxon>Rickettsiales</taxon>
        <taxon>Anaplasmataceae</taxon>
        <taxon>Ehrlichia</taxon>
    </lineage>
</organism>
<name>ATPB_EHRRG</name>
<accession>Q5FGY3</accession>